<accession>Q665H6</accession>
<evidence type="ECO:0000255" key="1">
    <source>
        <dbReference type="HAMAP-Rule" id="MF_00765"/>
    </source>
</evidence>
<gene>
    <name evidence="1" type="primary">darP</name>
    <name type="ordered locus">YPTB3542</name>
</gene>
<sequence>MNKQPEDWLDDVPENKNDDDDEIIWVSKSEIKRDAEALKDLGTELVDLGKNALERIPLDEDLLAAIELAQKIKKEGRRRQIQLIGKMLRARDVEPIQTALDKLKNRHNQQVSLFHKLETLRDRLIAEGDDAIPTVLELYPDADRQQLRSLVRNAQKEQAANKPPKSFRQIFSYLRELAEKQQ</sequence>
<feature type="chain" id="PRO_0000257652" description="Dual-action ribosomal maturation protein DarP">
    <location>
        <begin position="1"/>
        <end position="182"/>
    </location>
</feature>
<dbReference type="EMBL" id="BX936398">
    <property type="protein sequence ID" value="CAH22780.1"/>
    <property type="molecule type" value="Genomic_DNA"/>
</dbReference>
<dbReference type="RefSeq" id="WP_011193153.1">
    <property type="nucleotide sequence ID" value="NC_006155.1"/>
</dbReference>
<dbReference type="SMR" id="Q665H6"/>
<dbReference type="GeneID" id="49784471"/>
<dbReference type="KEGG" id="ypo:BZ17_3059"/>
<dbReference type="KEGG" id="yps:YPTB3542"/>
<dbReference type="PATRIC" id="fig|273123.14.peg.3205"/>
<dbReference type="Proteomes" id="UP000001011">
    <property type="component" value="Chromosome"/>
</dbReference>
<dbReference type="GO" id="GO:0005829">
    <property type="term" value="C:cytosol"/>
    <property type="evidence" value="ECO:0007669"/>
    <property type="project" value="TreeGrafter"/>
</dbReference>
<dbReference type="GO" id="GO:0043022">
    <property type="term" value="F:ribosome binding"/>
    <property type="evidence" value="ECO:0007669"/>
    <property type="project" value="UniProtKB-UniRule"/>
</dbReference>
<dbReference type="GO" id="GO:0019843">
    <property type="term" value="F:rRNA binding"/>
    <property type="evidence" value="ECO:0007669"/>
    <property type="project" value="UniProtKB-UniRule"/>
</dbReference>
<dbReference type="GO" id="GO:1902626">
    <property type="term" value="P:assembly of large subunit precursor of preribosome"/>
    <property type="evidence" value="ECO:0007669"/>
    <property type="project" value="UniProtKB-UniRule"/>
</dbReference>
<dbReference type="CDD" id="cd16331">
    <property type="entry name" value="YjgA-like"/>
    <property type="match status" value="1"/>
</dbReference>
<dbReference type="FunFam" id="1.10.60.30:FF:000001">
    <property type="entry name" value="UPF0307 protein YjgA"/>
    <property type="match status" value="1"/>
</dbReference>
<dbReference type="FunFam" id="1.10.60.30:FF:000002">
    <property type="entry name" value="UPF0307 protein YjgA"/>
    <property type="match status" value="1"/>
</dbReference>
<dbReference type="Gene3D" id="1.10.60.30">
    <property type="entry name" value="PSPTO4464-like domains"/>
    <property type="match status" value="2"/>
</dbReference>
<dbReference type="HAMAP" id="MF_00765">
    <property type="entry name" value="DarP"/>
    <property type="match status" value="1"/>
</dbReference>
<dbReference type="InterPro" id="IPR006839">
    <property type="entry name" value="DarP"/>
</dbReference>
<dbReference type="InterPro" id="IPR023153">
    <property type="entry name" value="DarP_sf"/>
</dbReference>
<dbReference type="NCBIfam" id="NF003593">
    <property type="entry name" value="PRK05255.1-1"/>
    <property type="match status" value="1"/>
</dbReference>
<dbReference type="PANTHER" id="PTHR38101">
    <property type="entry name" value="UPF0307 PROTEIN YJGA"/>
    <property type="match status" value="1"/>
</dbReference>
<dbReference type="PANTHER" id="PTHR38101:SF1">
    <property type="entry name" value="UPF0307 PROTEIN YJGA"/>
    <property type="match status" value="1"/>
</dbReference>
<dbReference type="Pfam" id="PF04751">
    <property type="entry name" value="DarP"/>
    <property type="match status" value="1"/>
</dbReference>
<dbReference type="PIRSF" id="PIRSF016183">
    <property type="entry name" value="UCP016183"/>
    <property type="match status" value="1"/>
</dbReference>
<dbReference type="SUPFAM" id="SSF158710">
    <property type="entry name" value="PSPTO4464-like"/>
    <property type="match status" value="1"/>
</dbReference>
<name>DARP_YERPS</name>
<comment type="function">
    <text evidence="1">Member of a network of 50S ribosomal subunit biogenesis factors which assembles along the 30S-50S interface, preventing incorrect 23S rRNA structures from forming. Promotes peptidyl transferase center (PTC) maturation.</text>
</comment>
<comment type="subcellular location">
    <subcellularLocation>
        <location evidence="1">Cytoplasm</location>
    </subcellularLocation>
    <text evidence="1">Associates with late stage pre-50S ribosomal subunits.</text>
</comment>
<comment type="similarity">
    <text evidence="1">Belongs to the DarP family.</text>
</comment>
<organism>
    <name type="scientific">Yersinia pseudotuberculosis serotype I (strain IP32953)</name>
    <dbReference type="NCBI Taxonomy" id="273123"/>
    <lineage>
        <taxon>Bacteria</taxon>
        <taxon>Pseudomonadati</taxon>
        <taxon>Pseudomonadota</taxon>
        <taxon>Gammaproteobacteria</taxon>
        <taxon>Enterobacterales</taxon>
        <taxon>Yersiniaceae</taxon>
        <taxon>Yersinia</taxon>
    </lineage>
</organism>
<reference key="1">
    <citation type="journal article" date="2004" name="Proc. Natl. Acad. Sci. U.S.A.">
        <title>Insights into the evolution of Yersinia pestis through whole-genome comparison with Yersinia pseudotuberculosis.</title>
        <authorList>
            <person name="Chain P.S.G."/>
            <person name="Carniel E."/>
            <person name="Larimer F.W."/>
            <person name="Lamerdin J."/>
            <person name="Stoutland P.O."/>
            <person name="Regala W.M."/>
            <person name="Georgescu A.M."/>
            <person name="Vergez L.M."/>
            <person name="Land M.L."/>
            <person name="Motin V.L."/>
            <person name="Brubaker R.R."/>
            <person name="Fowler J."/>
            <person name="Hinnebusch J."/>
            <person name="Marceau M."/>
            <person name="Medigue C."/>
            <person name="Simonet M."/>
            <person name="Chenal-Francisque V."/>
            <person name="Souza B."/>
            <person name="Dacheux D."/>
            <person name="Elliott J.M."/>
            <person name="Derbise A."/>
            <person name="Hauser L.J."/>
            <person name="Garcia E."/>
        </authorList>
    </citation>
    <scope>NUCLEOTIDE SEQUENCE [LARGE SCALE GENOMIC DNA]</scope>
    <source>
        <strain>IP32953</strain>
    </source>
</reference>
<proteinExistence type="inferred from homology"/>
<protein>
    <recommendedName>
        <fullName evidence="1">Dual-action ribosomal maturation protein DarP</fullName>
    </recommendedName>
    <alternativeName>
        <fullName evidence="1">Large ribosomal subunit assembly factor DarP</fullName>
    </alternativeName>
</protein>
<keyword id="KW-0963">Cytoplasm</keyword>
<keyword id="KW-0690">Ribosome biogenesis</keyword>
<keyword id="KW-0694">RNA-binding</keyword>
<keyword id="KW-0699">rRNA-binding</keyword>